<proteinExistence type="evidence at protein level"/>
<evidence type="ECO:0000250" key="1"/>
<evidence type="ECO:0000250" key="2">
    <source>
        <dbReference type="UniProtKB" id="P21359"/>
    </source>
</evidence>
<evidence type="ECO:0000250" key="3">
    <source>
        <dbReference type="UniProtKB" id="P97526"/>
    </source>
</evidence>
<evidence type="ECO:0000255" key="4">
    <source>
        <dbReference type="PROSITE-ProRule" id="PRU00056"/>
    </source>
</evidence>
<evidence type="ECO:0000255" key="5">
    <source>
        <dbReference type="PROSITE-ProRule" id="PRU00167"/>
    </source>
</evidence>
<evidence type="ECO:0000256" key="6">
    <source>
        <dbReference type="SAM" id="MobiDB-lite"/>
    </source>
</evidence>
<evidence type="ECO:0000269" key="7">
    <source>
    </source>
</evidence>
<evidence type="ECO:0000269" key="8">
    <source>
    </source>
</evidence>
<evidence type="ECO:0000303" key="9">
    <source>
    </source>
</evidence>
<evidence type="ECO:0000303" key="10">
    <source ref="4"/>
</evidence>
<evidence type="ECO:0000305" key="11"/>
<evidence type="ECO:0007744" key="12">
    <source>
    </source>
</evidence>
<keyword id="KW-0007">Acetylation</keyword>
<keyword id="KW-0025">Alternative splicing</keyword>
<keyword id="KW-1003">Cell membrane</keyword>
<keyword id="KW-0903">Direct protein sequencing</keyword>
<keyword id="KW-0343">GTPase activation</keyword>
<keyword id="KW-0446">Lipid-binding</keyword>
<keyword id="KW-0472">Membrane</keyword>
<keyword id="KW-0539">Nucleus</keyword>
<keyword id="KW-0597">Phosphoprotein</keyword>
<keyword id="KW-1185">Reference proteome</keyword>
<keyword id="KW-0832">Ubl conjugation</keyword>
<accession>Q04690</accession>
<accession>Q61956</accession>
<accession>Q61957</accession>
<organism>
    <name type="scientific">Mus musculus</name>
    <name type="common">Mouse</name>
    <dbReference type="NCBI Taxonomy" id="10090"/>
    <lineage>
        <taxon>Eukaryota</taxon>
        <taxon>Metazoa</taxon>
        <taxon>Chordata</taxon>
        <taxon>Craniata</taxon>
        <taxon>Vertebrata</taxon>
        <taxon>Euteleostomi</taxon>
        <taxon>Mammalia</taxon>
        <taxon>Eutheria</taxon>
        <taxon>Euarchontoglires</taxon>
        <taxon>Glires</taxon>
        <taxon>Rodentia</taxon>
        <taxon>Myomorpha</taxon>
        <taxon>Muroidea</taxon>
        <taxon>Muridae</taxon>
        <taxon>Murinae</taxon>
        <taxon>Mus</taxon>
        <taxon>Mus</taxon>
    </lineage>
</organism>
<feature type="initiator methionine" description="Removed" evidence="3">
    <location>
        <position position="1"/>
    </location>
</feature>
<feature type="chain" id="PRO_0000056666" description="Neurofibromin">
    <location>
        <begin position="2"/>
        <end position="2841"/>
    </location>
</feature>
<feature type="domain" description="Ras-GAP" evidence="5">
    <location>
        <begin position="1253"/>
        <end position="1484"/>
    </location>
</feature>
<feature type="domain" description="CRAL-TRIO" evidence="4">
    <location>
        <begin position="1582"/>
        <end position="1740"/>
    </location>
</feature>
<feature type="region of interest" description="Lipid binding" evidence="1">
    <location>
        <begin position="1582"/>
        <end position="1839"/>
    </location>
</feature>
<feature type="region of interest" description="Disordered" evidence="6">
    <location>
        <begin position="2786"/>
        <end position="2841"/>
    </location>
</feature>
<feature type="short sequence motif" description="Bipartite nuclear localization signal" evidence="1">
    <location>
        <begin position="2557"/>
        <end position="2573"/>
    </location>
</feature>
<feature type="compositionally biased region" description="Polar residues" evidence="6">
    <location>
        <begin position="2818"/>
        <end position="2829"/>
    </location>
</feature>
<feature type="site" description="Arginine finger; crucial for GTP hydrolysis by stabilizing the transition state" evidence="5">
    <location>
        <position position="1278"/>
    </location>
</feature>
<feature type="modified residue" description="N-acetylalanine" evidence="3">
    <location>
        <position position="2"/>
    </location>
</feature>
<feature type="modified residue" description="Phosphoserine" evidence="12">
    <location>
        <position position="866"/>
    </location>
</feature>
<feature type="modified residue" description="Phosphoserine" evidence="12">
    <location>
        <position position="878"/>
    </location>
</feature>
<feature type="modified residue" description="Phosphoserine" evidence="2">
    <location>
        <position position="2190"/>
    </location>
</feature>
<feature type="modified residue" description="Phosphoserine" evidence="12">
    <location>
        <position position="2469"/>
    </location>
</feature>
<feature type="modified residue" description="Phosphothreonine" evidence="12">
    <location>
        <position position="2516"/>
    </location>
</feature>
<feature type="modified residue" description="Phosphoserine" evidence="12">
    <location>
        <position position="2517"/>
    </location>
</feature>
<feature type="modified residue" description="Phosphoserine" evidence="2">
    <location>
        <position position="2523"/>
    </location>
</feature>
<feature type="modified residue" description="Phosphoserine" evidence="12">
    <location>
        <position position="2525"/>
    </location>
</feature>
<feature type="modified residue" description="Phosphoserine" evidence="2">
    <location>
        <position position="2545"/>
    </location>
</feature>
<feature type="modified residue" description="Phosphothreonine" evidence="2">
    <location>
        <position position="2567"/>
    </location>
</feature>
<feature type="modified residue" description="Phosphoserine" evidence="12">
    <location>
        <position position="2599"/>
    </location>
</feature>
<feature type="modified residue" description="Phosphoserine" evidence="2">
    <location>
        <position position="2804"/>
    </location>
</feature>
<feature type="modified residue" description="Phosphoserine" evidence="2">
    <location>
        <position position="2819"/>
    </location>
</feature>
<feature type="splice variant" id="VSP_001633" description="In isoform I and isoform IV." evidence="11">
    <location>
        <begin position="1373"/>
        <end position="1393"/>
    </location>
</feature>
<feature type="splice variant" id="VSP_001634" description="In isoform III and isoform IV." evidence="11">
    <original>VVSQRFPQNSIGA</original>
    <variation>VPKSSCFSCLNNRWLASASLRTASVP</variation>
    <location>
        <begin position="1394"/>
        <end position="1406"/>
    </location>
</feature>
<feature type="splice variant" id="VSP_001635" description="In isoform III and isoform IV." evidence="11">
    <location>
        <begin position="1407"/>
        <end position="2841"/>
    </location>
</feature>
<sequence length="2841" mass="319596">MAAHRPVEWVQAVVSRFDEQLPIKTGQQNTHTKVSTEHNKECLINISKYKFSLVISGLTTILKNVNNMRIFGEAAEKNLYLSQLIILDTLEKCLAGQPKDTMRLDETMLVKQLLPEICHFLHTCREGNQHAAELRNSASGVLFSLSCNNFNAVFSRISTRLQELTVCSEDNVDVHDIELLQYINVDCAKLKRLLKETAFKFKALKKVAQLAVINSLEKAFWNWVENYPDEFTKLYQIPQTDMAECAEKLFDLVDGFAESTKRKAAVWPLQIILLILCPEIIQDISKDVVDESNINKKLFLDSLRKALAGHGGSRQLTESAAIACVKLCKASTYINWEDNSVIFLLVQSMVVDLKNLLFNPSKPFSRGSQPADVDLMIDCLVSCFRISPHNNQHFKICLAQNSPSTFHYVLVNSLHRIITNSALDWWPKIDAVYCHSVELRNMFGETLHKAVQGCGAHPAIRMAPSLTFKEKVTSLKFKEKPTDLETRSYKCLLLSMVKLIHADPKLLLCNPRKQGPETQSSTAELITGLVQLVPQSHMPEVAQEAMEALLVLHQLDSIDLWNPDAPVETFWEISSQMLFYICKKLTSHQMLSSTEILKWLREILICRNKFLLKNKQADRSSCHSLYLYGVGCEMSATGNTTQMSVDHDEFLRACTPGASLRKGRGNSSMDSTAGCSGTPPICRQAQTKLEVALYMFLWNPDTEAVLVAMSCFRHLCEEADIRCGVDEVSVHNFLPNYNTFMEFASVSNMMSTGRAALQKRVMALLRRIEHPTAGNIEAWEDTHAKWEQATKLILNYPKAKMEDGQAAESLHKTIVKRRMSHVSGGGSIDLSDTDSLQEWINMTGFLCALGGVCLQQRSSSGLATYSPPMGAVSERKGSMISVMSSEGNIDSPVSRFMDRLLSLMVCNHEKVGLQIRTNVKDLVGLELSPALYPMLFNKLKNTISKFFDSQGQVLLSDSNTQFVEQTIAIMKNLLDNHTEGSSEHLGQASIETMMLNLVRYVRVLGNMVHAIQIKTKLCQLVEVMMARRDDLSFCQEMKFRNKMVEYLTDWVMGTSNQAADDDIKCLTRDLDQASMEAVVSLLAGLPLQPEEGDGVELMEAKSQLFLKYFTLFMNLLNDCSEVEDENAQTGGRKRGMSRRLASLRHCTVLAMSNLLNANVDSGLMHSIGLGYHKDLQTRATFMEVLTKILQQGTEFDTLAETVLADRFERLVELVTMMGDQGELPIAMALANVVPCSQWDELARVLVTLFDSRHLLYQLLWNMFSKEVELADSMQTLFRGNSLASKIMTFCFKVYGATYLQKLLDPLLRVIITSSDWQHVSFEVDPTRLEPSESLEENQRNLLQMTEKFFHAIISSSSEFPSQLRSVCHCLYQATCHSLLNKATVKERKENKKSVVSQRFPQNSIGAVGSAMFLRFINPAIVSPYEAGILDKKPPPRIERGLKLMSKVLQSIANHVLFTKEEHMRPFNDFVKSNFDLARRFFLDIASDCPTSDAVNHSLSFISDGNVLALHRLLWNNQEKIGQYLSSNRDHKAVGRRPFDKMATLLAYLGPPEHKPVADTHWSSLNLTSSKFEEFMTRHQVHEKEEFKALKTLSIFYQAGTSKAGNPIFYYVARRFKTGQINGDLLIYHVLLTLKPYYAKPYEIVVDLTHTGPSNRFKTDFLSKWFVVFPGFAYDNVSAVYIYNCNSWVREYTKYHERLLTGLKGSKRLIFIDCPGKLAEHIEHEQQKLPAATLALEEDLKVFHNALKLAHKDTKVSIKVGSTAVQVTSAERTKVLGQSVFLNDIYYASEIEEICLVDENQFTLTIANQGTPLTFMHQECEAIVQSIIHIRTRWELSQPDSIPQHTKIRPKDVPGTLLNIALLNLGSSDPSLRSAAYNLLCALTCTFNLKIEGQLLETSGLCIPANNTLFIVSISKTLAANEPHLTLEFLEECISGFSKSSIELKHLCLEYMTPWLSNLVRFCKHNDDAKRQRVTAILDKLITMTINEKQMYPSIQAKIWGSLGQITDLLDVVLDSFIKTSATGGLGSIKAEVMADTAVALASGNVKLVSSKVIGRMCKIIDKTCLSPTPTLEQHLMWDDIAILARYMLMLSFNNSLDVAAHLPYLFHVVTFLVATGPLSLRASTHGLLINIIHSLCTCSQLHFSEETKQVLRLSLTEFSLPKFYLLFGISKVKSAAVIAFRSSYRDRSFSPGSYERETFALTSLETVTEALLEIMEACMRDIPTCKWLDQWTELAQRFAFQYNPSLQPRALVVFGCISKRVSHGQIKQIIRILSKALESCLKGPDTYNSQVLIESTVIALTKLQPLLNKDSPLHKALFWVAVAVLQLDEVNLYSAGTALLEQNLHTLDSLRIFNDKSPEEVFMAIRNPLEWHCKQMDHFVGLNFNSNFNFALVGHLLKGYRHPSPAIVARTVRILHTLLTLVNKHRNCDKFEVNTQSVAYLAALLTVSEEVRSRCSLKHRKSLLLTDISMENVPMDTYPIHHGDPSYRTLKETQPWSSPKGSEGYLAATYPAVGQTSPRARKSMSLDMGQPSQANTKKLLGTRKSFDHLISDTKAPKRQEMESGITTPPKMRRVAETDYEMETQRIPSSQQHPHLRKVSVSESNVLLDEEVLTDPKIQALLLTVLATLVKYTTDEFDQRILYEYLAEASVVFPKVFPVVHNLLDSKINTLLSLCQDPNLLNPIHGIVQSVVYHEESPPQYQTSYLQSFGFNGLWRFAGPFSKQTQIPDYAELIVKFLDALIDTYLPGIDEETSEESLLTPTSPYPPALQSQLSITANLNLSNSMTSLATSQHSPGLDKENVELSPTAGHCNSGRTRHGSASQVQKQRSAGSFKRNSIKKIV</sequence>
<gene>
    <name type="primary">Nf1</name>
</gene>
<comment type="function">
    <text evidence="2">Stimulates the GTPase activity of Ras (By similarity). NF1 shows greater affinity for Ras GAP, but lower specific activity (By similarity). May be a regulator of Ras activity (By similarity).</text>
</comment>
<comment type="subunit">
    <text evidence="2">Interacts with HTR6. Interacts with SPRED2.</text>
</comment>
<comment type="subcellular location">
    <subcellularLocation>
        <location evidence="2">Nucleus</location>
    </subcellularLocation>
    <subcellularLocation>
        <location evidence="2">Nucleus</location>
        <location evidence="2">Nucleolus</location>
    </subcellularLocation>
    <subcellularLocation>
        <location evidence="2">Cell membrane</location>
    </subcellularLocation>
</comment>
<comment type="alternative products">
    <event type="alternative splicing"/>
    <isoform>
        <id>Q04690-1</id>
        <name evidence="9">II</name>
        <sequence type="displayed"/>
    </isoform>
    <isoform>
        <id>Q04690-2</id>
        <name evidence="9">I</name>
        <sequence type="described" ref="VSP_001633"/>
    </isoform>
    <isoform>
        <id>Q04690-3</id>
        <name evidence="9">III</name>
        <sequence type="described" ref="VSP_001634 VSP_001635"/>
    </isoform>
    <isoform>
        <id>Q04690-4</id>
        <name evidence="10">IV</name>
        <sequence type="described" ref="VSP_001633 VSP_001634 VSP_001635"/>
    </isoform>
</comment>
<comment type="tissue specificity">
    <molecule>Isoform I</molecule>
    <text evidence="8">Expressed predominantly in brain, spinal cord and testis.</text>
</comment>
<comment type="tissue specificity">
    <molecule>Isoform II</molecule>
    <text evidence="8">Expressed predominantly in adrenal gland, kidney, ovary and lung.</text>
</comment>
<comment type="tissue specificity">
    <molecule>Isoform III</molecule>
    <text evidence="8">Widely and more weakly expressed. Predominantly expressed in adrenal gland.</text>
</comment>
<comment type="tissue specificity">
    <molecule>Isoform IV</molecule>
    <text evidence="8">Widely and more weakly expressed. Expressed mainly in testis.</text>
</comment>
<comment type="domain">
    <text evidence="2">Binds phospholipids via its C-terminal CRAL-TRIO domain. Binds primarily glycerophospholipids with monounsaturated C18:1 and/or C16:1 fatty acid moieties and a phosphatidylethanolamine or phosphatidylcholine headgroup. Has lesser affinity for lipids containing phosphatidylserine and phosphatidylinositol.</text>
</comment>
<comment type="PTM">
    <text evidence="7">Ubiquitinated by RNF7/RBX2, leading to its degradation.</text>
</comment>
<reference key="1">
    <citation type="journal article" date="1993" name="Hum. Mol. Genet.">
        <title>Mouse neurofibromatosis type 1 cDNA sequence reveals high degree of conservation of both coding and non-coding mRNA segments.</title>
        <authorList>
            <person name="Bernards A."/>
            <person name="Snijders A.J."/>
            <person name="Hannigan G.E."/>
            <person name="Murthy A.E."/>
            <person name="Gusella J.F."/>
        </authorList>
    </citation>
    <scope>NUCLEOTIDE SEQUENCE [GENOMIC DNA / MRNA]</scope>
    <source>
        <strain>BALB/cJ</strain>
        <tissue>Brain</tissue>
    </source>
</reference>
<reference key="2">
    <citation type="journal article" date="1994" name="Gene">
        <title>A novel isoform of the neurofibromatosis type-1 mRNA and a switch of isoforms during murine cell differentiation and proliferation.</title>
        <authorList>
            <person name="Mantani A."/>
            <person name="Makasugi S."/>
            <person name="Yokota Y."/>
            <person name="Abe K."/>
            <person name="Ushio Y."/>
            <person name="Yamamura K."/>
        </authorList>
    </citation>
    <scope>NUCLEOTIDE SEQUENCE [MRNA] OF 1178-1555</scope>
    <scope>ALTERNATIVE SPLICING (ISOFORMS I; II; III AND IV)</scope>
    <scope>TISSUE SPECIFICITY</scope>
</reference>
<reference key="3">
    <citation type="journal article" date="1990" name="Nature">
        <title>Sequence homology shared by neurofibromatosis type-1 gene and IRA-1 and IRA-2 negative regulators of the RAS cyclic AMP pathway.</title>
        <authorList>
            <person name="Buchberg A.M."/>
            <person name="Cleveland L.S."/>
            <person name="Jenkins N.A."/>
            <person name="Copeland N.G."/>
        </authorList>
    </citation>
    <scope>NUCLEOTIDE SEQUENCE OF 1950-2568</scope>
</reference>
<reference key="4">
    <citation type="submission" date="2009-01" db="UniProtKB">
        <authorList>
            <person name="Lubec G."/>
            <person name="Sunyer B."/>
            <person name="Chen W.-Q."/>
        </authorList>
    </citation>
    <scope>PROTEIN SEQUENCE OF 1973-1979</scope>
    <scope>IDENTIFICATION BY MASS SPECTROMETRY</scope>
    <source>
        <strain>OF1</strain>
        <tissue>Hippocampus</tissue>
    </source>
</reference>
<reference key="5">
    <citation type="journal article" date="2010" name="Cell">
        <title>A tissue-specific atlas of mouse protein phosphorylation and expression.</title>
        <authorList>
            <person name="Huttlin E.L."/>
            <person name="Jedrychowski M.P."/>
            <person name="Elias J.E."/>
            <person name="Goswami T."/>
            <person name="Rad R."/>
            <person name="Beausoleil S.A."/>
            <person name="Villen J."/>
            <person name="Haas W."/>
            <person name="Sowa M.E."/>
            <person name="Gygi S.P."/>
        </authorList>
    </citation>
    <scope>PHOSPHORYLATION [LARGE SCALE ANALYSIS] AT SER-866; SER-878; SER-2469; THR-2516; SER-2517; SER-2525 AND SER-2599</scope>
    <scope>IDENTIFICATION BY MASS SPECTROMETRY [LARGE SCALE ANALYSIS]</scope>
    <source>
        <tissue>Brain</tissue>
        <tissue>Brown adipose tissue</tissue>
        <tissue>Heart</tissue>
        <tissue>Kidney</tissue>
        <tissue>Lung</tissue>
        <tissue>Pancreas</tissue>
        <tissue>Spleen</tissue>
        <tissue>Testis</tissue>
    </source>
</reference>
<reference key="6">
    <citation type="journal article" date="2011" name="Dev. Cell">
        <title>SAG/RBX2/ROC2 E3 ubiquitin ligase is essential for vascular and neural development by targeting NF1 for degradation.</title>
        <authorList>
            <person name="Tan M."/>
            <person name="Zhao Y."/>
            <person name="Kim S.J."/>
            <person name="Liu M."/>
            <person name="Jia L."/>
            <person name="Saunders T.L."/>
            <person name="Zhu Y."/>
            <person name="Sun Y."/>
        </authorList>
    </citation>
    <scope>UBIQUITINATION</scope>
</reference>
<name>NF1_MOUSE</name>
<dbReference type="EMBL" id="L10369">
    <property type="protein sequence ID" value="AAA39806.1"/>
    <property type="molecule type" value="Genomic_DNA"/>
</dbReference>
<dbReference type="EMBL" id="L10367">
    <property type="protein sequence ID" value="AAA39806.1"/>
    <property type="status" value="JOINED"/>
    <property type="molecule type" value="Genomic_DNA"/>
</dbReference>
<dbReference type="EMBL" id="L10368">
    <property type="protein sequence ID" value="AAA39806.1"/>
    <property type="status" value="JOINED"/>
    <property type="molecule type" value="Genomic_DNA"/>
</dbReference>
<dbReference type="EMBL" id="L10370">
    <property type="protein sequence ID" value="AAA68132.1"/>
    <property type="molecule type" value="mRNA"/>
</dbReference>
<dbReference type="EMBL" id="X54924">
    <property type="protein sequence ID" value="CAA38690.1"/>
    <property type="molecule type" value="mRNA"/>
</dbReference>
<dbReference type="EMBL" id="D30730">
    <property type="protein sequence ID" value="BAA06395.1"/>
    <property type="molecule type" value="mRNA"/>
</dbReference>
<dbReference type="EMBL" id="D30731">
    <property type="protein sequence ID" value="BAA06396.1"/>
    <property type="molecule type" value="mRNA"/>
</dbReference>
<dbReference type="CCDS" id="CCDS25119.1">
    <molecule id="Q04690-1"/>
</dbReference>
<dbReference type="PIR" id="I53855">
    <property type="entry name" value="I53855"/>
</dbReference>
<dbReference type="PIR" id="I54352">
    <property type="entry name" value="I54352"/>
</dbReference>
<dbReference type="PIR" id="I67934">
    <property type="entry name" value="I67934"/>
</dbReference>
<dbReference type="PIR" id="I68623">
    <property type="entry name" value="I68623"/>
</dbReference>
<dbReference type="RefSeq" id="NP_035027.1">
    <molecule id="Q04690-1"/>
    <property type="nucleotide sequence ID" value="NM_010897.2"/>
</dbReference>
<dbReference type="RefSeq" id="XP_006532504.1">
    <molecule id="Q04690-2"/>
    <property type="nucleotide sequence ID" value="XM_006532441.5"/>
</dbReference>
<dbReference type="SMR" id="Q04690"/>
<dbReference type="BioGRID" id="201736">
    <property type="interactions" value="22"/>
</dbReference>
<dbReference type="CORUM" id="Q04690"/>
<dbReference type="FunCoup" id="Q04690">
    <property type="interactions" value="3252"/>
</dbReference>
<dbReference type="IntAct" id="Q04690">
    <property type="interactions" value="11"/>
</dbReference>
<dbReference type="MINT" id="Q04690"/>
<dbReference type="STRING" id="10090.ENSMUSP00000071289"/>
<dbReference type="ChEMBL" id="CHEMBL2176807"/>
<dbReference type="GlyGen" id="Q04690">
    <property type="glycosylation" value="5 sites, 1 O-linked glycan (4 sites)"/>
</dbReference>
<dbReference type="iPTMnet" id="Q04690"/>
<dbReference type="PhosphoSitePlus" id="Q04690"/>
<dbReference type="SwissPalm" id="Q04690"/>
<dbReference type="jPOST" id="Q04690"/>
<dbReference type="PaxDb" id="10090-ENSMUSP00000071289"/>
<dbReference type="PeptideAtlas" id="Q04690"/>
<dbReference type="ProteomicsDB" id="252826">
    <molecule id="Q04690-1"/>
</dbReference>
<dbReference type="ProteomicsDB" id="252827">
    <molecule id="Q04690-2"/>
</dbReference>
<dbReference type="ProteomicsDB" id="252828">
    <molecule id="Q04690-3"/>
</dbReference>
<dbReference type="ProteomicsDB" id="252829">
    <molecule id="Q04690-4"/>
</dbReference>
<dbReference type="Pumba" id="Q04690"/>
<dbReference type="Antibodypedia" id="3471">
    <property type="antibodies" value="480 antibodies from 39 providers"/>
</dbReference>
<dbReference type="DNASU" id="18015"/>
<dbReference type="Ensembl" id="ENSMUST00000071325.9">
    <molecule id="Q04690-1"/>
    <property type="protein sequence ID" value="ENSMUSP00000071289.3"/>
    <property type="gene ID" value="ENSMUSG00000020716.17"/>
</dbReference>
<dbReference type="Ensembl" id="ENSMUST00000108251.9">
    <molecule id="Q04690-2"/>
    <property type="protein sequence ID" value="ENSMUSP00000103886.3"/>
    <property type="gene ID" value="ENSMUSG00000020716.17"/>
</dbReference>
<dbReference type="GeneID" id="18015"/>
<dbReference type="KEGG" id="mmu:18015"/>
<dbReference type="UCSC" id="uc007kkl.1">
    <molecule id="Q04690-1"/>
    <property type="organism name" value="mouse"/>
</dbReference>
<dbReference type="AGR" id="MGI:97306"/>
<dbReference type="CTD" id="4763"/>
<dbReference type="MGI" id="MGI:97306">
    <property type="gene designation" value="Nf1"/>
</dbReference>
<dbReference type="VEuPathDB" id="HostDB:ENSMUSG00000020716"/>
<dbReference type="eggNOG" id="KOG1826">
    <property type="taxonomic scope" value="Eukaryota"/>
</dbReference>
<dbReference type="GeneTree" id="ENSGT00550000074797"/>
<dbReference type="HOGENOM" id="CLU_000249_0_0_1"/>
<dbReference type="InParanoid" id="Q04690"/>
<dbReference type="OMA" id="TKEPYMF"/>
<dbReference type="PhylomeDB" id="Q04690"/>
<dbReference type="TreeFam" id="TF300302"/>
<dbReference type="Reactome" id="R-MMU-5658442">
    <property type="pathway name" value="Regulation of RAS by GAPs"/>
</dbReference>
<dbReference type="BioGRID-ORCS" id="18015">
    <property type="hits" value="17 hits in 87 CRISPR screens"/>
</dbReference>
<dbReference type="CD-CODE" id="CE726F99">
    <property type="entry name" value="Postsynaptic density"/>
</dbReference>
<dbReference type="ChiTaRS" id="Nf1">
    <property type="organism name" value="mouse"/>
</dbReference>
<dbReference type="PRO" id="PR:Q04690"/>
<dbReference type="Proteomes" id="UP000000589">
    <property type="component" value="Chromosome 11"/>
</dbReference>
<dbReference type="RNAct" id="Q04690">
    <property type="molecule type" value="protein"/>
</dbReference>
<dbReference type="Bgee" id="ENSMUSG00000020716">
    <property type="expression patterns" value="Expressed in spermatocyte and 179 other cell types or tissues"/>
</dbReference>
<dbReference type="ExpressionAtlas" id="Q04690">
    <property type="expression patterns" value="baseline and differential"/>
</dbReference>
<dbReference type="GO" id="GO:0030424">
    <property type="term" value="C:axon"/>
    <property type="evidence" value="ECO:0007669"/>
    <property type="project" value="Ensembl"/>
</dbReference>
<dbReference type="GO" id="GO:0005737">
    <property type="term" value="C:cytoplasm"/>
    <property type="evidence" value="ECO:0000314"/>
    <property type="project" value="MGI"/>
</dbReference>
<dbReference type="GO" id="GO:0030425">
    <property type="term" value="C:dendrite"/>
    <property type="evidence" value="ECO:0007669"/>
    <property type="project" value="Ensembl"/>
</dbReference>
<dbReference type="GO" id="GO:0098978">
    <property type="term" value="C:glutamatergic synapse"/>
    <property type="evidence" value="ECO:0000314"/>
    <property type="project" value="SynGO"/>
</dbReference>
<dbReference type="GO" id="GO:0005730">
    <property type="term" value="C:nucleolus"/>
    <property type="evidence" value="ECO:0007669"/>
    <property type="project" value="UniProtKB-SubCell"/>
</dbReference>
<dbReference type="GO" id="GO:0005654">
    <property type="term" value="C:nucleoplasm"/>
    <property type="evidence" value="ECO:0007669"/>
    <property type="project" value="Ensembl"/>
</dbReference>
<dbReference type="GO" id="GO:0005886">
    <property type="term" value="C:plasma membrane"/>
    <property type="evidence" value="ECO:0007669"/>
    <property type="project" value="UniProtKB-SubCell"/>
</dbReference>
<dbReference type="GO" id="GO:0098793">
    <property type="term" value="C:presynapse"/>
    <property type="evidence" value="ECO:0007669"/>
    <property type="project" value="GOC"/>
</dbReference>
<dbReference type="GO" id="GO:0005096">
    <property type="term" value="F:GTPase activator activity"/>
    <property type="evidence" value="ECO:0000315"/>
    <property type="project" value="MGI"/>
</dbReference>
<dbReference type="GO" id="GO:0008017">
    <property type="term" value="F:microtubule binding"/>
    <property type="evidence" value="ECO:0000266"/>
    <property type="project" value="MGI"/>
</dbReference>
<dbReference type="GO" id="GO:0031210">
    <property type="term" value="F:phosphatidylcholine binding"/>
    <property type="evidence" value="ECO:0000250"/>
    <property type="project" value="UniProtKB"/>
</dbReference>
<dbReference type="GO" id="GO:0008429">
    <property type="term" value="F:phosphatidylethanolamine binding"/>
    <property type="evidence" value="ECO:0000250"/>
    <property type="project" value="UniProtKB"/>
</dbReference>
<dbReference type="GO" id="GO:0030036">
    <property type="term" value="P:actin cytoskeleton organization"/>
    <property type="evidence" value="ECO:0000315"/>
    <property type="project" value="MGI"/>
</dbReference>
<dbReference type="GO" id="GO:0030325">
    <property type="term" value="P:adrenal gland development"/>
    <property type="evidence" value="ECO:0000315"/>
    <property type="project" value="MGI"/>
</dbReference>
<dbReference type="GO" id="GO:0021764">
    <property type="term" value="P:amygdala development"/>
    <property type="evidence" value="ECO:0000316"/>
    <property type="project" value="MGI"/>
</dbReference>
<dbReference type="GO" id="GO:0001525">
    <property type="term" value="P:angiogenesis"/>
    <property type="evidence" value="ECO:0000316"/>
    <property type="project" value="MGI"/>
</dbReference>
<dbReference type="GO" id="GO:0006915">
    <property type="term" value="P:apoptotic process"/>
    <property type="evidence" value="ECO:0000315"/>
    <property type="project" value="MGI"/>
</dbReference>
<dbReference type="GO" id="GO:0048844">
    <property type="term" value="P:artery morphogenesis"/>
    <property type="evidence" value="ECO:0000315"/>
    <property type="project" value="MGI"/>
</dbReference>
<dbReference type="GO" id="GO:0048708">
    <property type="term" value="P:astrocyte differentiation"/>
    <property type="evidence" value="ECO:0000315"/>
    <property type="project" value="MGI"/>
</dbReference>
<dbReference type="GO" id="GO:0007420">
    <property type="term" value="P:brain development"/>
    <property type="evidence" value="ECO:0000315"/>
    <property type="project" value="MGI"/>
</dbReference>
<dbReference type="GO" id="GO:0048593">
    <property type="term" value="P:camera-type eye morphogenesis"/>
    <property type="evidence" value="ECO:0000315"/>
    <property type="project" value="MGI"/>
</dbReference>
<dbReference type="GO" id="GO:0007154">
    <property type="term" value="P:cell communication"/>
    <property type="evidence" value="ECO:0000315"/>
    <property type="project" value="MGI"/>
</dbReference>
<dbReference type="GO" id="GO:0016477">
    <property type="term" value="P:cell migration"/>
    <property type="evidence" value="ECO:0000315"/>
    <property type="project" value="MGI"/>
</dbReference>
<dbReference type="GO" id="GO:0008283">
    <property type="term" value="P:cell population proliferation"/>
    <property type="evidence" value="ECO:0000315"/>
    <property type="project" value="MGI"/>
</dbReference>
<dbReference type="GO" id="GO:0034605">
    <property type="term" value="P:cellular response to heat"/>
    <property type="evidence" value="ECO:0000314"/>
    <property type="project" value="MGI"/>
</dbReference>
<dbReference type="GO" id="GO:0021987">
    <property type="term" value="P:cerebral cortex development"/>
    <property type="evidence" value="ECO:0000315"/>
    <property type="project" value="MGI"/>
</dbReference>
<dbReference type="GO" id="GO:0030199">
    <property type="term" value="P:collagen fibril organization"/>
    <property type="evidence" value="ECO:0000315"/>
    <property type="project" value="MGI"/>
</dbReference>
<dbReference type="GO" id="GO:0001935">
    <property type="term" value="P:endothelial cell proliferation"/>
    <property type="evidence" value="ECO:0000315"/>
    <property type="project" value="MGI"/>
</dbReference>
<dbReference type="GO" id="GO:0030198">
    <property type="term" value="P:extracellular matrix organization"/>
    <property type="evidence" value="ECO:0000315"/>
    <property type="project" value="MGI"/>
</dbReference>
<dbReference type="GO" id="GO:0097192">
    <property type="term" value="P:extrinsic apoptotic signaling pathway in absence of ligand"/>
    <property type="evidence" value="ECO:0000315"/>
    <property type="project" value="MGI"/>
</dbReference>
<dbReference type="GO" id="GO:0008625">
    <property type="term" value="P:extrinsic apoptotic signaling pathway via death domain receptors"/>
    <property type="evidence" value="ECO:0000315"/>
    <property type="project" value="MGI"/>
</dbReference>
<dbReference type="GO" id="GO:0048144">
    <property type="term" value="P:fibroblast proliferation"/>
    <property type="evidence" value="ECO:0000315"/>
    <property type="project" value="MGI"/>
</dbReference>
<dbReference type="GO" id="GO:0021897">
    <property type="term" value="P:forebrain astrocyte development"/>
    <property type="evidence" value="ECO:0000315"/>
    <property type="project" value="MGI"/>
</dbReference>
<dbReference type="GO" id="GO:0048853">
    <property type="term" value="P:forebrain morphogenesis"/>
    <property type="evidence" value="ECO:0000315"/>
    <property type="project" value="MGI"/>
</dbReference>
<dbReference type="GO" id="GO:0061534">
    <property type="term" value="P:gamma-aminobutyric acid secretion, neurotransmission"/>
    <property type="evidence" value="ECO:0000316"/>
    <property type="project" value="MGI"/>
</dbReference>
<dbReference type="GO" id="GO:0014009">
    <property type="term" value="P:glial cell proliferation"/>
    <property type="evidence" value="ECO:0000315"/>
    <property type="project" value="MGI"/>
</dbReference>
<dbReference type="GO" id="GO:0061535">
    <property type="term" value="P:glutamate secretion, neurotransmission"/>
    <property type="evidence" value="ECO:0000316"/>
    <property type="project" value="MGI"/>
</dbReference>
<dbReference type="GO" id="GO:0048820">
    <property type="term" value="P:hair follicle maturation"/>
    <property type="evidence" value="ECO:0000315"/>
    <property type="project" value="MGI"/>
</dbReference>
<dbReference type="GO" id="GO:0007507">
    <property type="term" value="P:heart development"/>
    <property type="evidence" value="ECO:0000315"/>
    <property type="project" value="MGI"/>
</dbReference>
<dbReference type="GO" id="GO:0071887">
    <property type="term" value="P:leukocyte apoptotic process"/>
    <property type="evidence" value="ECO:0000315"/>
    <property type="project" value="MGI"/>
</dbReference>
<dbReference type="GO" id="GO:0001889">
    <property type="term" value="P:liver development"/>
    <property type="evidence" value="ECO:0000315"/>
    <property type="project" value="MGI"/>
</dbReference>
<dbReference type="GO" id="GO:0060291">
    <property type="term" value="P:long-term synaptic potentiation"/>
    <property type="evidence" value="ECO:0000315"/>
    <property type="project" value="MGI"/>
</dbReference>
<dbReference type="GO" id="GO:0000165">
    <property type="term" value="P:MAPK cascade"/>
    <property type="evidence" value="ECO:0000315"/>
    <property type="project" value="MGI"/>
</dbReference>
<dbReference type="GO" id="GO:0033024">
    <property type="term" value="P:mast cell apoptotic process"/>
    <property type="evidence" value="ECO:0000316"/>
    <property type="project" value="MGI"/>
</dbReference>
<dbReference type="GO" id="GO:0070662">
    <property type="term" value="P:mast cell proliferation"/>
    <property type="evidence" value="ECO:0000316"/>
    <property type="project" value="MGI"/>
</dbReference>
<dbReference type="GO" id="GO:0001656">
    <property type="term" value="P:metanephros development"/>
    <property type="evidence" value="ECO:0000315"/>
    <property type="project" value="MGI"/>
</dbReference>
<dbReference type="GO" id="GO:0022011">
    <property type="term" value="P:myelination in peripheral nervous system"/>
    <property type="evidence" value="ECO:0000315"/>
    <property type="project" value="MGI"/>
</dbReference>
<dbReference type="GO" id="GO:0033028">
    <property type="term" value="P:myeloid cell apoptotic process"/>
    <property type="evidence" value="ECO:0000315"/>
    <property type="project" value="MGI"/>
</dbReference>
<dbReference type="GO" id="GO:0097529">
    <property type="term" value="P:myeloid leukocyte migration"/>
    <property type="evidence" value="ECO:0000316"/>
    <property type="project" value="MGI"/>
</dbReference>
<dbReference type="GO" id="GO:0016525">
    <property type="term" value="P:negative regulation of angiogenesis"/>
    <property type="evidence" value="ECO:0000316"/>
    <property type="project" value="MGI"/>
</dbReference>
<dbReference type="GO" id="GO:0048712">
    <property type="term" value="P:negative regulation of astrocyte differentiation"/>
    <property type="evidence" value="ECO:0000315"/>
    <property type="project" value="MGI"/>
</dbReference>
<dbReference type="GO" id="GO:0030336">
    <property type="term" value="P:negative regulation of cell migration"/>
    <property type="evidence" value="ECO:0000266"/>
    <property type="project" value="MGI"/>
</dbReference>
<dbReference type="GO" id="GO:0008285">
    <property type="term" value="P:negative regulation of cell population proliferation"/>
    <property type="evidence" value="ECO:0000315"/>
    <property type="project" value="MGI"/>
</dbReference>
<dbReference type="GO" id="GO:0001953">
    <property type="term" value="P:negative regulation of cell-matrix adhesion"/>
    <property type="evidence" value="ECO:0000316"/>
    <property type="project" value="MGI"/>
</dbReference>
<dbReference type="GO" id="GO:0001937">
    <property type="term" value="P:negative regulation of endothelial cell proliferation"/>
    <property type="evidence" value="ECO:0000315"/>
    <property type="project" value="MGI"/>
</dbReference>
<dbReference type="GO" id="GO:0048147">
    <property type="term" value="P:negative regulation of fibroblast proliferation"/>
    <property type="evidence" value="ECO:0000315"/>
    <property type="project" value="BHF-UCL"/>
</dbReference>
<dbReference type="GO" id="GO:0060253">
    <property type="term" value="P:negative regulation of glial cell proliferation"/>
    <property type="evidence" value="ECO:0000315"/>
    <property type="project" value="MGI"/>
</dbReference>
<dbReference type="GO" id="GO:0002686">
    <property type="term" value="P:negative regulation of leukocyte migration"/>
    <property type="evidence" value="ECO:0000316"/>
    <property type="project" value="MGI"/>
</dbReference>
<dbReference type="GO" id="GO:0043409">
    <property type="term" value="P:negative regulation of MAPK cascade"/>
    <property type="evidence" value="ECO:0000315"/>
    <property type="project" value="MGI"/>
</dbReference>
<dbReference type="GO" id="GO:0070667">
    <property type="term" value="P:negative regulation of mast cell proliferation"/>
    <property type="evidence" value="ECO:0000316"/>
    <property type="project" value="MGI"/>
</dbReference>
<dbReference type="GO" id="GO:0007406">
    <property type="term" value="P:negative regulation of neuroblast proliferation"/>
    <property type="evidence" value="ECO:0000315"/>
    <property type="project" value="MGI"/>
</dbReference>
<dbReference type="GO" id="GO:0046929">
    <property type="term" value="P:negative regulation of neurotransmitter secretion"/>
    <property type="evidence" value="ECO:0000315"/>
    <property type="project" value="MGI"/>
</dbReference>
<dbReference type="GO" id="GO:0048715">
    <property type="term" value="P:negative regulation of oligodendrocyte differentiation"/>
    <property type="evidence" value="ECO:0000315"/>
    <property type="project" value="MGI"/>
</dbReference>
<dbReference type="GO" id="GO:0045671">
    <property type="term" value="P:negative regulation of osteoclast differentiation"/>
    <property type="evidence" value="ECO:0000316"/>
    <property type="project" value="MGI"/>
</dbReference>
<dbReference type="GO" id="GO:0042308">
    <property type="term" value="P:negative regulation of protein import into nucleus"/>
    <property type="evidence" value="ECO:0000315"/>
    <property type="project" value="MGI"/>
</dbReference>
<dbReference type="GO" id="GO:0035021">
    <property type="term" value="P:negative regulation of Rac protein signal transduction"/>
    <property type="evidence" value="ECO:0000316"/>
    <property type="project" value="MGI"/>
</dbReference>
<dbReference type="GO" id="GO:0046580">
    <property type="term" value="P:negative regulation of Ras protein signal transduction"/>
    <property type="evidence" value="ECO:0000315"/>
    <property type="project" value="MGI"/>
</dbReference>
<dbReference type="GO" id="GO:1900148">
    <property type="term" value="P:negative regulation of Schwann cell migration"/>
    <property type="evidence" value="ECO:0000315"/>
    <property type="project" value="MGI"/>
</dbReference>
<dbReference type="GO" id="GO:0010626">
    <property type="term" value="P:negative regulation of Schwann cell proliferation"/>
    <property type="evidence" value="ECO:0000315"/>
    <property type="project" value="MGI"/>
</dbReference>
<dbReference type="GO" id="GO:2000647">
    <property type="term" value="P:negative regulation of stem cell proliferation"/>
    <property type="evidence" value="ECO:0000316"/>
    <property type="project" value="MGI"/>
</dbReference>
<dbReference type="GO" id="GO:1904753">
    <property type="term" value="P:negative regulation of vascular associated smooth muscle cell migration"/>
    <property type="evidence" value="ECO:0000316"/>
    <property type="project" value="MGI"/>
</dbReference>
<dbReference type="GO" id="GO:0021915">
    <property type="term" value="P:neural tube development"/>
    <property type="evidence" value="ECO:0000316"/>
    <property type="project" value="MGI"/>
</dbReference>
<dbReference type="GO" id="GO:0007405">
    <property type="term" value="P:neuroblast proliferation"/>
    <property type="evidence" value="ECO:0000315"/>
    <property type="project" value="MGI"/>
</dbReference>
<dbReference type="GO" id="GO:0051402">
    <property type="term" value="P:neuron apoptotic process"/>
    <property type="evidence" value="ECO:0000315"/>
    <property type="project" value="MGI"/>
</dbReference>
<dbReference type="GO" id="GO:0007269">
    <property type="term" value="P:neurotransmitter secretion"/>
    <property type="evidence" value="ECO:0000315"/>
    <property type="project" value="MGI"/>
</dbReference>
<dbReference type="GO" id="GO:0098597">
    <property type="term" value="P:observational learning"/>
    <property type="evidence" value="ECO:0000316"/>
    <property type="project" value="MGI"/>
</dbReference>
<dbReference type="GO" id="GO:0048709">
    <property type="term" value="P:oligodendrocyte differentiation"/>
    <property type="evidence" value="ECO:0000315"/>
    <property type="project" value="MGI"/>
</dbReference>
<dbReference type="GO" id="GO:0001649">
    <property type="term" value="P:osteoblast differentiation"/>
    <property type="evidence" value="ECO:0000315"/>
    <property type="project" value="MGI"/>
</dbReference>
<dbReference type="GO" id="GO:0030316">
    <property type="term" value="P:osteoclast differentiation"/>
    <property type="evidence" value="ECO:0000316"/>
    <property type="project" value="MGI"/>
</dbReference>
<dbReference type="GO" id="GO:0007422">
    <property type="term" value="P:peripheral nervous system development"/>
    <property type="evidence" value="ECO:0000315"/>
    <property type="project" value="MGI"/>
</dbReference>
<dbReference type="GO" id="GO:0043491">
    <property type="term" value="P:phosphatidylinositol 3-kinase/protein kinase B signal transduction"/>
    <property type="evidence" value="ECO:0000315"/>
    <property type="project" value="MGI"/>
</dbReference>
<dbReference type="GO" id="GO:0043473">
    <property type="term" value="P:pigmentation"/>
    <property type="evidence" value="ECO:0000315"/>
    <property type="project" value="MGI"/>
</dbReference>
<dbReference type="GO" id="GO:0043065">
    <property type="term" value="P:positive regulation of apoptotic process"/>
    <property type="evidence" value="ECO:0000315"/>
    <property type="project" value="MGI"/>
</dbReference>
<dbReference type="GO" id="GO:0001938">
    <property type="term" value="P:positive regulation of endothelial cell proliferation"/>
    <property type="evidence" value="ECO:0000316"/>
    <property type="project" value="MGI"/>
</dbReference>
<dbReference type="GO" id="GO:2001241">
    <property type="term" value="P:positive regulation of extrinsic apoptotic signaling pathway in absence of ligand"/>
    <property type="evidence" value="ECO:0000315"/>
    <property type="project" value="MGI"/>
</dbReference>
<dbReference type="GO" id="GO:2000108">
    <property type="term" value="P:positive regulation of leukocyte apoptotic process"/>
    <property type="evidence" value="ECO:0000315"/>
    <property type="project" value="MGI"/>
</dbReference>
<dbReference type="GO" id="GO:0033027">
    <property type="term" value="P:positive regulation of mast cell apoptotic process"/>
    <property type="evidence" value="ECO:0000316"/>
    <property type="project" value="MGI"/>
</dbReference>
<dbReference type="GO" id="GO:0033034">
    <property type="term" value="P:positive regulation of myeloid cell apoptotic process"/>
    <property type="evidence" value="ECO:0000315"/>
    <property type="project" value="MGI"/>
</dbReference>
<dbReference type="GO" id="GO:0043525">
    <property type="term" value="P:positive regulation of neuron apoptotic process"/>
    <property type="evidence" value="ECO:0000315"/>
    <property type="project" value="MGI"/>
</dbReference>
<dbReference type="GO" id="GO:1904707">
    <property type="term" value="P:positive regulation of vascular associated smooth muscle cell proliferation"/>
    <property type="evidence" value="ECO:0000316"/>
    <property type="project" value="MGI"/>
</dbReference>
<dbReference type="GO" id="GO:0006606">
    <property type="term" value="P:protein import into nucleus"/>
    <property type="evidence" value="ECO:0000315"/>
    <property type="project" value="MGI"/>
</dbReference>
<dbReference type="GO" id="GO:0016601">
    <property type="term" value="P:Rac protein signal transduction"/>
    <property type="evidence" value="ECO:0000316"/>
    <property type="project" value="MGI"/>
</dbReference>
<dbReference type="GO" id="GO:0007265">
    <property type="term" value="P:Ras protein signal transduction"/>
    <property type="evidence" value="ECO:0000315"/>
    <property type="project" value="MGI"/>
</dbReference>
<dbReference type="GO" id="GO:0045765">
    <property type="term" value="P:regulation of angiogenesis"/>
    <property type="evidence" value="ECO:0000315"/>
    <property type="project" value="MGI"/>
</dbReference>
<dbReference type="GO" id="GO:0043535">
    <property type="term" value="P:regulation of blood vessel endothelial cell migration"/>
    <property type="evidence" value="ECO:0007669"/>
    <property type="project" value="Ensembl"/>
</dbReference>
<dbReference type="GO" id="GO:0045124">
    <property type="term" value="P:regulation of bone resorption"/>
    <property type="evidence" value="ECO:0000315"/>
    <property type="project" value="MGI"/>
</dbReference>
<dbReference type="GO" id="GO:0042127">
    <property type="term" value="P:regulation of cell population proliferation"/>
    <property type="evidence" value="ECO:0000316"/>
    <property type="project" value="MGI"/>
</dbReference>
<dbReference type="GO" id="GO:0001952">
    <property type="term" value="P:regulation of cell-matrix adhesion"/>
    <property type="evidence" value="ECO:0000315"/>
    <property type="project" value="MGI"/>
</dbReference>
<dbReference type="GO" id="GO:0070372">
    <property type="term" value="P:regulation of ERK1 and ERK2 cascade"/>
    <property type="evidence" value="ECO:0000315"/>
    <property type="project" value="MGI"/>
</dbReference>
<dbReference type="GO" id="GO:0010468">
    <property type="term" value="P:regulation of gene expression"/>
    <property type="evidence" value="ECO:0000316"/>
    <property type="project" value="MGI"/>
</dbReference>
<dbReference type="GO" id="GO:0045685">
    <property type="term" value="P:regulation of glial cell differentiation"/>
    <property type="evidence" value="ECO:0000315"/>
    <property type="project" value="MGI"/>
</dbReference>
<dbReference type="GO" id="GO:0048169">
    <property type="term" value="P:regulation of long-term neuronal synaptic plasticity"/>
    <property type="evidence" value="ECO:0000315"/>
    <property type="project" value="MGI"/>
</dbReference>
<dbReference type="GO" id="GO:1900271">
    <property type="term" value="P:regulation of long-term synaptic potentiation"/>
    <property type="evidence" value="ECO:0000316"/>
    <property type="project" value="MGI"/>
</dbReference>
<dbReference type="GO" id="GO:0043408">
    <property type="term" value="P:regulation of MAPK cascade"/>
    <property type="evidence" value="ECO:0000316"/>
    <property type="project" value="MGI"/>
</dbReference>
<dbReference type="GO" id="GO:0099175">
    <property type="term" value="P:regulation of postsynapse organization"/>
    <property type="evidence" value="ECO:0000314"/>
    <property type="project" value="SynGO"/>
</dbReference>
<dbReference type="GO" id="GO:0032228">
    <property type="term" value="P:regulation of synaptic transmission, GABAergic"/>
    <property type="evidence" value="ECO:0000316"/>
    <property type="project" value="MGI"/>
</dbReference>
<dbReference type="GO" id="GO:0001666">
    <property type="term" value="P:response to hypoxia"/>
    <property type="evidence" value="ECO:0000315"/>
    <property type="project" value="MGI"/>
</dbReference>
<dbReference type="GO" id="GO:0014044">
    <property type="term" value="P:Schwann cell development"/>
    <property type="evidence" value="ECO:0000315"/>
    <property type="project" value="MGI"/>
</dbReference>
<dbReference type="GO" id="GO:0036135">
    <property type="term" value="P:Schwann cell migration"/>
    <property type="evidence" value="ECO:0000315"/>
    <property type="project" value="MGI"/>
</dbReference>
<dbReference type="GO" id="GO:0014010">
    <property type="term" value="P:Schwann cell proliferation"/>
    <property type="evidence" value="ECO:0000315"/>
    <property type="project" value="MGI"/>
</dbReference>
<dbReference type="GO" id="GO:0007519">
    <property type="term" value="P:skeletal muscle tissue development"/>
    <property type="evidence" value="ECO:0000315"/>
    <property type="project" value="MGI"/>
</dbReference>
<dbReference type="GO" id="GO:0048745">
    <property type="term" value="P:smooth muscle tissue development"/>
    <property type="evidence" value="ECO:0000315"/>
    <property type="project" value="MGI"/>
</dbReference>
<dbReference type="GO" id="GO:0021510">
    <property type="term" value="P:spinal cord development"/>
    <property type="evidence" value="ECO:0000315"/>
    <property type="project" value="MGI"/>
</dbReference>
<dbReference type="GO" id="GO:0072089">
    <property type="term" value="P:stem cell proliferation"/>
    <property type="evidence" value="ECO:0000316"/>
    <property type="project" value="MGI"/>
</dbReference>
<dbReference type="GO" id="GO:0048485">
    <property type="term" value="P:sympathetic nervous system development"/>
    <property type="evidence" value="ECO:0000315"/>
    <property type="project" value="MGI"/>
</dbReference>
<dbReference type="GO" id="GO:1904738">
    <property type="term" value="P:vascular associated smooth muscle cell migration"/>
    <property type="evidence" value="ECO:0000316"/>
    <property type="project" value="MGI"/>
</dbReference>
<dbReference type="GO" id="GO:1990874">
    <property type="term" value="P:vascular associated smooth muscle cell proliferation"/>
    <property type="evidence" value="ECO:0000316"/>
    <property type="project" value="MGI"/>
</dbReference>
<dbReference type="GO" id="GO:0008542">
    <property type="term" value="P:visual learning"/>
    <property type="evidence" value="ECO:0000315"/>
    <property type="project" value="MGI"/>
</dbReference>
<dbReference type="GO" id="GO:0042060">
    <property type="term" value="P:wound healing"/>
    <property type="evidence" value="ECO:0000315"/>
    <property type="project" value="MGI"/>
</dbReference>
<dbReference type="CDD" id="cd13313">
    <property type="entry name" value="PH_NF1"/>
    <property type="match status" value="1"/>
</dbReference>
<dbReference type="CDD" id="cd05130">
    <property type="entry name" value="RasGAP_Neurofibromin"/>
    <property type="match status" value="1"/>
</dbReference>
<dbReference type="CDD" id="cd00170">
    <property type="entry name" value="SEC14"/>
    <property type="match status" value="1"/>
</dbReference>
<dbReference type="FunFam" id="2.30.29.30:FF:000070">
    <property type="entry name" value="Neurofibromin 1"/>
    <property type="match status" value="1"/>
</dbReference>
<dbReference type="FunFam" id="3.40.525.10:FF:000004">
    <property type="entry name" value="Neurofibromin 1"/>
    <property type="match status" value="1"/>
</dbReference>
<dbReference type="FunFam" id="1.10.506.10:FF:000015">
    <property type="entry name" value="Neurofibromin isoform 1"/>
    <property type="match status" value="1"/>
</dbReference>
<dbReference type="FunFam" id="1.10.506.10:FF:000023">
    <property type="entry name" value="Neurofibromin isoform 1"/>
    <property type="match status" value="1"/>
</dbReference>
<dbReference type="Gene3D" id="3.40.525.10">
    <property type="entry name" value="CRAL-TRIO lipid binding domain"/>
    <property type="match status" value="1"/>
</dbReference>
<dbReference type="Gene3D" id="1.10.506.10">
    <property type="entry name" value="GTPase Activation - p120gap, domain 1"/>
    <property type="match status" value="5"/>
</dbReference>
<dbReference type="Gene3D" id="2.30.29.30">
    <property type="entry name" value="Pleckstrin-homology domain (PH domain)/Phosphotyrosine-binding domain (PTB)"/>
    <property type="match status" value="1"/>
</dbReference>
<dbReference type="InterPro" id="IPR016024">
    <property type="entry name" value="ARM-type_fold"/>
</dbReference>
<dbReference type="InterPro" id="IPR001251">
    <property type="entry name" value="CRAL-TRIO_dom"/>
</dbReference>
<dbReference type="InterPro" id="IPR036865">
    <property type="entry name" value="CRAL-TRIO_dom_sf"/>
</dbReference>
<dbReference type="InterPro" id="IPR011993">
    <property type="entry name" value="PH-like_dom_sf"/>
</dbReference>
<dbReference type="InterPro" id="IPR054071">
    <property type="entry name" value="PH_NF1"/>
</dbReference>
<dbReference type="InterPro" id="IPR039360">
    <property type="entry name" value="Ras_GTPase"/>
</dbReference>
<dbReference type="InterPro" id="IPR023152">
    <property type="entry name" value="RasGAP_CS"/>
</dbReference>
<dbReference type="InterPro" id="IPR001936">
    <property type="entry name" value="RasGAP_dom"/>
</dbReference>
<dbReference type="InterPro" id="IPR008936">
    <property type="entry name" value="Rho_GTPase_activation_prot"/>
</dbReference>
<dbReference type="PANTHER" id="PTHR10194:SF142">
    <property type="entry name" value="NEUROFIBROMIN"/>
    <property type="match status" value="1"/>
</dbReference>
<dbReference type="PANTHER" id="PTHR10194">
    <property type="entry name" value="RAS GTPASE-ACTIVATING PROTEINS"/>
    <property type="match status" value="1"/>
</dbReference>
<dbReference type="Pfam" id="PF13716">
    <property type="entry name" value="CRAL_TRIO_2"/>
    <property type="match status" value="1"/>
</dbReference>
<dbReference type="Pfam" id="PF21877">
    <property type="entry name" value="PH_NF1"/>
    <property type="match status" value="1"/>
</dbReference>
<dbReference type="Pfam" id="PF00616">
    <property type="entry name" value="RasGAP"/>
    <property type="match status" value="1"/>
</dbReference>
<dbReference type="SMART" id="SM00323">
    <property type="entry name" value="RasGAP"/>
    <property type="match status" value="1"/>
</dbReference>
<dbReference type="SMART" id="SM00516">
    <property type="entry name" value="SEC14"/>
    <property type="match status" value="1"/>
</dbReference>
<dbReference type="SUPFAM" id="SSF48371">
    <property type="entry name" value="ARM repeat"/>
    <property type="match status" value="1"/>
</dbReference>
<dbReference type="SUPFAM" id="SSF48350">
    <property type="entry name" value="GTPase activation domain, GAP"/>
    <property type="match status" value="1"/>
</dbReference>
<dbReference type="PROSITE" id="PS50191">
    <property type="entry name" value="CRAL_TRIO"/>
    <property type="match status" value="1"/>
</dbReference>
<dbReference type="PROSITE" id="PS00509">
    <property type="entry name" value="RAS_GTPASE_ACTIV_1"/>
    <property type="match status" value="1"/>
</dbReference>
<dbReference type="PROSITE" id="PS50018">
    <property type="entry name" value="RAS_GTPASE_ACTIV_2"/>
    <property type="match status" value="1"/>
</dbReference>
<protein>
    <recommendedName>
        <fullName>Neurofibromin</fullName>
    </recommendedName>
    <alternativeName>
        <fullName>Neurofibromatosis-related protein NF-1</fullName>
    </alternativeName>
</protein>